<evidence type="ECO:0000255" key="1">
    <source>
        <dbReference type="HAMAP-Rule" id="MF_00767"/>
    </source>
</evidence>
<organism>
    <name type="scientific">Escherichia coli O81 (strain ED1a)</name>
    <dbReference type="NCBI Taxonomy" id="585397"/>
    <lineage>
        <taxon>Bacteria</taxon>
        <taxon>Pseudomonadati</taxon>
        <taxon>Pseudomonadota</taxon>
        <taxon>Gammaproteobacteria</taxon>
        <taxon>Enterobacterales</taxon>
        <taxon>Enterobacteriaceae</taxon>
        <taxon>Escherichia</taxon>
    </lineage>
</organism>
<feature type="chain" id="PRO_1000148440" description="Succinylglutamate desuccinylase">
    <location>
        <begin position="1"/>
        <end position="322"/>
    </location>
</feature>
<feature type="active site" evidence="1">
    <location>
        <position position="210"/>
    </location>
</feature>
<feature type="binding site" evidence="1">
    <location>
        <position position="53"/>
    </location>
    <ligand>
        <name>Zn(2+)</name>
        <dbReference type="ChEBI" id="CHEBI:29105"/>
    </ligand>
</feature>
<feature type="binding site" evidence="1">
    <location>
        <position position="56"/>
    </location>
    <ligand>
        <name>Zn(2+)</name>
        <dbReference type="ChEBI" id="CHEBI:29105"/>
    </ligand>
</feature>
<feature type="binding site" evidence="1">
    <location>
        <position position="147"/>
    </location>
    <ligand>
        <name>Zn(2+)</name>
        <dbReference type="ChEBI" id="CHEBI:29105"/>
    </ligand>
</feature>
<accession>B7MVM3</accession>
<gene>
    <name evidence="1" type="primary">astE</name>
    <name type="ordered locus">ECED1_1946</name>
</gene>
<comment type="function">
    <text evidence="1">Transforms N(2)-succinylglutamate into succinate and glutamate.</text>
</comment>
<comment type="catalytic activity">
    <reaction evidence="1">
        <text>N-succinyl-L-glutamate + H2O = L-glutamate + succinate</text>
        <dbReference type="Rhea" id="RHEA:15169"/>
        <dbReference type="ChEBI" id="CHEBI:15377"/>
        <dbReference type="ChEBI" id="CHEBI:29985"/>
        <dbReference type="ChEBI" id="CHEBI:30031"/>
        <dbReference type="ChEBI" id="CHEBI:58763"/>
        <dbReference type="EC" id="3.5.1.96"/>
    </reaction>
</comment>
<comment type="cofactor">
    <cofactor evidence="1">
        <name>Zn(2+)</name>
        <dbReference type="ChEBI" id="CHEBI:29105"/>
    </cofactor>
    <text evidence="1">Binds 1 zinc ion per subunit.</text>
</comment>
<comment type="pathway">
    <text evidence="1">Amino-acid degradation; L-arginine degradation via AST pathway; L-glutamate and succinate from L-arginine: step 5/5.</text>
</comment>
<comment type="similarity">
    <text evidence="1">Belongs to the AspA/AstE family. Succinylglutamate desuccinylase subfamily.</text>
</comment>
<name>ASTE_ECO81</name>
<reference key="1">
    <citation type="journal article" date="2009" name="PLoS Genet.">
        <title>Organised genome dynamics in the Escherichia coli species results in highly diverse adaptive paths.</title>
        <authorList>
            <person name="Touchon M."/>
            <person name="Hoede C."/>
            <person name="Tenaillon O."/>
            <person name="Barbe V."/>
            <person name="Baeriswyl S."/>
            <person name="Bidet P."/>
            <person name="Bingen E."/>
            <person name="Bonacorsi S."/>
            <person name="Bouchier C."/>
            <person name="Bouvet O."/>
            <person name="Calteau A."/>
            <person name="Chiapello H."/>
            <person name="Clermont O."/>
            <person name="Cruveiller S."/>
            <person name="Danchin A."/>
            <person name="Diard M."/>
            <person name="Dossat C."/>
            <person name="Karoui M.E."/>
            <person name="Frapy E."/>
            <person name="Garry L."/>
            <person name="Ghigo J.M."/>
            <person name="Gilles A.M."/>
            <person name="Johnson J."/>
            <person name="Le Bouguenec C."/>
            <person name="Lescat M."/>
            <person name="Mangenot S."/>
            <person name="Martinez-Jehanne V."/>
            <person name="Matic I."/>
            <person name="Nassif X."/>
            <person name="Oztas S."/>
            <person name="Petit M.A."/>
            <person name="Pichon C."/>
            <person name="Rouy Z."/>
            <person name="Ruf C.S."/>
            <person name="Schneider D."/>
            <person name="Tourret J."/>
            <person name="Vacherie B."/>
            <person name="Vallenet D."/>
            <person name="Medigue C."/>
            <person name="Rocha E.P.C."/>
            <person name="Denamur E."/>
        </authorList>
    </citation>
    <scope>NUCLEOTIDE SEQUENCE [LARGE SCALE GENOMIC DNA]</scope>
    <source>
        <strain>ED1a</strain>
    </source>
</reference>
<dbReference type="EC" id="3.5.1.96" evidence="1"/>
<dbReference type="EMBL" id="CU928162">
    <property type="protein sequence ID" value="CAR08139.2"/>
    <property type="molecule type" value="Genomic_DNA"/>
</dbReference>
<dbReference type="RefSeq" id="WP_000368521.1">
    <property type="nucleotide sequence ID" value="NC_011745.1"/>
</dbReference>
<dbReference type="SMR" id="B7MVM3"/>
<dbReference type="KEGG" id="ecq:ECED1_1946"/>
<dbReference type="HOGENOM" id="CLU_071608_0_0_6"/>
<dbReference type="UniPathway" id="UPA00185">
    <property type="reaction ID" value="UER00283"/>
</dbReference>
<dbReference type="Proteomes" id="UP000000748">
    <property type="component" value="Chromosome"/>
</dbReference>
<dbReference type="GO" id="GO:0016788">
    <property type="term" value="F:hydrolase activity, acting on ester bonds"/>
    <property type="evidence" value="ECO:0007669"/>
    <property type="project" value="UniProtKB-UniRule"/>
</dbReference>
<dbReference type="GO" id="GO:0009017">
    <property type="term" value="F:succinylglutamate desuccinylase activity"/>
    <property type="evidence" value="ECO:0007669"/>
    <property type="project" value="UniProtKB-EC"/>
</dbReference>
<dbReference type="GO" id="GO:0008270">
    <property type="term" value="F:zinc ion binding"/>
    <property type="evidence" value="ECO:0007669"/>
    <property type="project" value="UniProtKB-UniRule"/>
</dbReference>
<dbReference type="GO" id="GO:0019544">
    <property type="term" value="P:arginine catabolic process to glutamate"/>
    <property type="evidence" value="ECO:0007669"/>
    <property type="project" value="UniProtKB-UniRule"/>
</dbReference>
<dbReference type="GO" id="GO:0019545">
    <property type="term" value="P:arginine catabolic process to succinate"/>
    <property type="evidence" value="ECO:0007669"/>
    <property type="project" value="UniProtKB-UniRule"/>
</dbReference>
<dbReference type="CDD" id="cd03855">
    <property type="entry name" value="M14_ASTE"/>
    <property type="match status" value="1"/>
</dbReference>
<dbReference type="FunFam" id="3.40.630.10:FF:000017">
    <property type="entry name" value="Succinylglutamate desuccinylase"/>
    <property type="match status" value="1"/>
</dbReference>
<dbReference type="Gene3D" id="3.40.630.10">
    <property type="entry name" value="Zn peptidases"/>
    <property type="match status" value="1"/>
</dbReference>
<dbReference type="HAMAP" id="MF_00767">
    <property type="entry name" value="Arg_catab_AstE"/>
    <property type="match status" value="1"/>
</dbReference>
<dbReference type="InterPro" id="IPR050178">
    <property type="entry name" value="AspA/AstE_fam"/>
</dbReference>
<dbReference type="InterPro" id="IPR055438">
    <property type="entry name" value="AstE_AspA_cat"/>
</dbReference>
<dbReference type="InterPro" id="IPR007036">
    <property type="entry name" value="Aste_AspA_hybrid_dom"/>
</dbReference>
<dbReference type="InterPro" id="IPR016681">
    <property type="entry name" value="SuccinylGlu_desuccinylase"/>
</dbReference>
<dbReference type="NCBIfam" id="TIGR03242">
    <property type="entry name" value="arg_catab_astE"/>
    <property type="match status" value="1"/>
</dbReference>
<dbReference type="NCBIfam" id="NF003706">
    <property type="entry name" value="PRK05324.1"/>
    <property type="match status" value="1"/>
</dbReference>
<dbReference type="PANTHER" id="PTHR15162">
    <property type="entry name" value="ASPARTOACYLASE"/>
    <property type="match status" value="1"/>
</dbReference>
<dbReference type="PANTHER" id="PTHR15162:SF7">
    <property type="entry name" value="SUCCINYLGLUTAMATE DESUCCINYLASE"/>
    <property type="match status" value="1"/>
</dbReference>
<dbReference type="Pfam" id="PF24827">
    <property type="entry name" value="AstE_AspA_cat"/>
    <property type="match status" value="1"/>
</dbReference>
<dbReference type="Pfam" id="PF04952">
    <property type="entry name" value="AstE_AspA_hybrid"/>
    <property type="match status" value="1"/>
</dbReference>
<dbReference type="PIRSF" id="PIRSF017020">
    <property type="entry name" value="AstE"/>
    <property type="match status" value="1"/>
</dbReference>
<dbReference type="SUPFAM" id="SSF53187">
    <property type="entry name" value="Zn-dependent exopeptidases"/>
    <property type="match status" value="1"/>
</dbReference>
<keyword id="KW-0056">Arginine metabolism</keyword>
<keyword id="KW-0378">Hydrolase</keyword>
<keyword id="KW-0479">Metal-binding</keyword>
<keyword id="KW-0862">Zinc</keyword>
<protein>
    <recommendedName>
        <fullName evidence="1">Succinylglutamate desuccinylase</fullName>
        <ecNumber evidence="1">3.5.1.96</ecNumber>
    </recommendedName>
</protein>
<sequence length="322" mass="35855">MDNFLALTLTGKKPVITEREINGVRWRWLGDGVLELTPLTPPQGVLVISAGIHGNETAPVEMLDALLGAISHGEIPLRWRLLVILGNPPALKQGKRYCHSDMNRMFGGRWQLFAESGETCRARELEQCLEDFYDQGKESVRWHLDLHTAIRGSLHPQFGVLPQRDIPWDEKFLTWLGAAGLEALVFHQEPGGTFTHFSARHFGALACTLELGKALPFGQNDLRQFAVTASAIAALLSGESVGIVRTPPLRYRVVSQITRHSPSFEMHMANDTLNFMPFEKGTLLAQDGEERFTVTHDVEYVLFPNPLVALGLRAGLMLEKIS</sequence>
<proteinExistence type="inferred from homology"/>